<evidence type="ECO:0000255" key="1">
    <source>
        <dbReference type="HAMAP-Rule" id="MF_01325"/>
    </source>
</evidence>
<evidence type="ECO:0000256" key="2">
    <source>
        <dbReference type="SAM" id="MobiDB-lite"/>
    </source>
</evidence>
<evidence type="ECO:0000305" key="3"/>
<dbReference type="EMBL" id="CP000503">
    <property type="protein sequence ID" value="ABM23009.1"/>
    <property type="molecule type" value="Genomic_DNA"/>
</dbReference>
<dbReference type="RefSeq" id="WP_011787572.1">
    <property type="nucleotide sequence ID" value="NC_008750.1"/>
</dbReference>
<dbReference type="SMR" id="A1REB4"/>
<dbReference type="GeneID" id="67441760"/>
<dbReference type="KEGG" id="shw:Sputw3181_0156"/>
<dbReference type="HOGENOM" id="CLU_044142_4_1_6"/>
<dbReference type="Proteomes" id="UP000002597">
    <property type="component" value="Chromosome"/>
</dbReference>
<dbReference type="GO" id="GO:0022625">
    <property type="term" value="C:cytosolic large ribosomal subunit"/>
    <property type="evidence" value="ECO:0007669"/>
    <property type="project" value="TreeGrafter"/>
</dbReference>
<dbReference type="GO" id="GO:0019843">
    <property type="term" value="F:rRNA binding"/>
    <property type="evidence" value="ECO:0007669"/>
    <property type="project" value="UniProtKB-UniRule"/>
</dbReference>
<dbReference type="GO" id="GO:0003735">
    <property type="term" value="F:structural constituent of ribosome"/>
    <property type="evidence" value="ECO:0007669"/>
    <property type="project" value="InterPro"/>
</dbReference>
<dbReference type="GO" id="GO:0006412">
    <property type="term" value="P:translation"/>
    <property type="evidence" value="ECO:0007669"/>
    <property type="project" value="UniProtKB-UniRule"/>
</dbReference>
<dbReference type="FunFam" id="2.40.30.10:FF:000004">
    <property type="entry name" value="50S ribosomal protein L3"/>
    <property type="match status" value="1"/>
</dbReference>
<dbReference type="FunFam" id="3.30.160.810:FF:000001">
    <property type="entry name" value="50S ribosomal protein L3"/>
    <property type="match status" value="1"/>
</dbReference>
<dbReference type="Gene3D" id="3.30.160.810">
    <property type="match status" value="1"/>
</dbReference>
<dbReference type="Gene3D" id="2.40.30.10">
    <property type="entry name" value="Translation factors"/>
    <property type="match status" value="1"/>
</dbReference>
<dbReference type="HAMAP" id="MF_01325_B">
    <property type="entry name" value="Ribosomal_uL3_B"/>
    <property type="match status" value="1"/>
</dbReference>
<dbReference type="InterPro" id="IPR000597">
    <property type="entry name" value="Ribosomal_uL3"/>
</dbReference>
<dbReference type="InterPro" id="IPR019927">
    <property type="entry name" value="Ribosomal_uL3_bac/org-type"/>
</dbReference>
<dbReference type="InterPro" id="IPR019926">
    <property type="entry name" value="Ribosomal_uL3_CS"/>
</dbReference>
<dbReference type="InterPro" id="IPR009000">
    <property type="entry name" value="Transl_B-barrel_sf"/>
</dbReference>
<dbReference type="NCBIfam" id="TIGR03625">
    <property type="entry name" value="L3_bact"/>
    <property type="match status" value="1"/>
</dbReference>
<dbReference type="PANTHER" id="PTHR11229">
    <property type="entry name" value="50S RIBOSOMAL PROTEIN L3"/>
    <property type="match status" value="1"/>
</dbReference>
<dbReference type="PANTHER" id="PTHR11229:SF16">
    <property type="entry name" value="LARGE RIBOSOMAL SUBUNIT PROTEIN UL3C"/>
    <property type="match status" value="1"/>
</dbReference>
<dbReference type="Pfam" id="PF00297">
    <property type="entry name" value="Ribosomal_L3"/>
    <property type="match status" value="1"/>
</dbReference>
<dbReference type="SUPFAM" id="SSF50447">
    <property type="entry name" value="Translation proteins"/>
    <property type="match status" value="1"/>
</dbReference>
<dbReference type="PROSITE" id="PS00474">
    <property type="entry name" value="RIBOSOMAL_L3"/>
    <property type="match status" value="1"/>
</dbReference>
<gene>
    <name evidence="1" type="primary">rplC</name>
    <name type="ordered locus">Sputw3181_0156</name>
</gene>
<sequence>MAIGLIGRKVGMTRIFTEDGVSIPVTVIEVAGNRVTQVKTLETDGYRALQVTTGTKKANRITKPEAGHFAKSGVEAGRGLWEVRLEDGEGEGIEVGAELNVDIFADVAKVDVTGQSKGKGFQGGVKRWNFRTQDMTHGNSLSHRSNGSIGQNQTPGRVFKGKKMSGHMGAERVTTQNLVVVRVDVERNLLLVRGAVPGATNGDLIIKPAVKA</sequence>
<feature type="chain" id="PRO_1000052142" description="Large ribosomal subunit protein uL3">
    <location>
        <begin position="1"/>
        <end position="212"/>
    </location>
</feature>
<feature type="region of interest" description="Disordered" evidence="2">
    <location>
        <begin position="136"/>
        <end position="157"/>
    </location>
</feature>
<feature type="compositionally biased region" description="Polar residues" evidence="2">
    <location>
        <begin position="136"/>
        <end position="155"/>
    </location>
</feature>
<feature type="modified residue" description="N5-methylglutamine" evidence="1">
    <location>
        <position position="153"/>
    </location>
</feature>
<protein>
    <recommendedName>
        <fullName evidence="1">Large ribosomal subunit protein uL3</fullName>
    </recommendedName>
    <alternativeName>
        <fullName evidence="3">50S ribosomal protein L3</fullName>
    </alternativeName>
</protein>
<proteinExistence type="inferred from homology"/>
<comment type="function">
    <text evidence="1">One of the primary rRNA binding proteins, it binds directly near the 3'-end of the 23S rRNA, where it nucleates assembly of the 50S subunit.</text>
</comment>
<comment type="subunit">
    <text evidence="1">Part of the 50S ribosomal subunit. Forms a cluster with proteins L14 and L19.</text>
</comment>
<comment type="PTM">
    <text evidence="1">Methylated by PrmB.</text>
</comment>
<comment type="similarity">
    <text evidence="1">Belongs to the universal ribosomal protein uL3 family.</text>
</comment>
<name>RL3_SHESW</name>
<accession>A1REB4</accession>
<organism>
    <name type="scientific">Shewanella sp. (strain W3-18-1)</name>
    <dbReference type="NCBI Taxonomy" id="351745"/>
    <lineage>
        <taxon>Bacteria</taxon>
        <taxon>Pseudomonadati</taxon>
        <taxon>Pseudomonadota</taxon>
        <taxon>Gammaproteobacteria</taxon>
        <taxon>Alteromonadales</taxon>
        <taxon>Shewanellaceae</taxon>
        <taxon>Shewanella</taxon>
    </lineage>
</organism>
<reference key="1">
    <citation type="submission" date="2006-12" db="EMBL/GenBank/DDBJ databases">
        <title>Complete sequence of Shewanella sp. W3-18-1.</title>
        <authorList>
            <consortium name="US DOE Joint Genome Institute"/>
            <person name="Copeland A."/>
            <person name="Lucas S."/>
            <person name="Lapidus A."/>
            <person name="Barry K."/>
            <person name="Detter J.C."/>
            <person name="Glavina del Rio T."/>
            <person name="Hammon N."/>
            <person name="Israni S."/>
            <person name="Dalin E."/>
            <person name="Tice H."/>
            <person name="Pitluck S."/>
            <person name="Chain P."/>
            <person name="Malfatti S."/>
            <person name="Shin M."/>
            <person name="Vergez L."/>
            <person name="Schmutz J."/>
            <person name="Larimer F."/>
            <person name="Land M."/>
            <person name="Hauser L."/>
            <person name="Kyrpides N."/>
            <person name="Lykidis A."/>
            <person name="Tiedje J."/>
            <person name="Richardson P."/>
        </authorList>
    </citation>
    <scope>NUCLEOTIDE SEQUENCE [LARGE SCALE GENOMIC DNA]</scope>
    <source>
        <strain>W3-18-1</strain>
    </source>
</reference>
<keyword id="KW-0488">Methylation</keyword>
<keyword id="KW-0687">Ribonucleoprotein</keyword>
<keyword id="KW-0689">Ribosomal protein</keyword>
<keyword id="KW-0694">RNA-binding</keyword>
<keyword id="KW-0699">rRNA-binding</keyword>